<protein>
    <recommendedName>
        <fullName>Uncharacterized protein Mb2910c</fullName>
    </recommendedName>
</protein>
<reference key="1">
    <citation type="journal article" date="2003" name="Proc. Natl. Acad. Sci. U.S.A.">
        <title>The complete genome sequence of Mycobacterium bovis.</title>
        <authorList>
            <person name="Garnier T."/>
            <person name="Eiglmeier K."/>
            <person name="Camus J.-C."/>
            <person name="Medina N."/>
            <person name="Mansoor H."/>
            <person name="Pryor M."/>
            <person name="Duthoy S."/>
            <person name="Grondin S."/>
            <person name="Lacroix C."/>
            <person name="Monsempe C."/>
            <person name="Simon S."/>
            <person name="Harris B."/>
            <person name="Atkin R."/>
            <person name="Doggett J."/>
            <person name="Mayes R."/>
            <person name="Keating L."/>
            <person name="Wheeler P.R."/>
            <person name="Parkhill J."/>
            <person name="Barrell B.G."/>
            <person name="Cole S.T."/>
            <person name="Gordon S.V."/>
            <person name="Hewinson R.G."/>
        </authorList>
    </citation>
    <scope>NUCLEOTIDE SEQUENCE [LARGE SCALE GENOMIC DNA]</scope>
    <source>
        <strain>ATCC BAA-935 / AF2122/97</strain>
    </source>
</reference>
<reference key="2">
    <citation type="journal article" date="2017" name="Genome Announc.">
        <title>Updated reference genome sequence and annotation of Mycobacterium bovis AF2122/97.</title>
        <authorList>
            <person name="Malone K.M."/>
            <person name="Farrell D."/>
            <person name="Stuber T.P."/>
            <person name="Schubert O.T."/>
            <person name="Aebersold R."/>
            <person name="Robbe-Austerman S."/>
            <person name="Gordon S.V."/>
        </authorList>
    </citation>
    <scope>NUCLEOTIDE SEQUENCE [LARGE SCALE GENOMIC DNA]</scope>
    <scope>GENOME REANNOTATION</scope>
    <source>
        <strain>ATCC BAA-935 / AF2122/97</strain>
    </source>
</reference>
<gene>
    <name type="ordered locus">BQ2027_MB2910C</name>
</gene>
<name>Y2910_MYCBO</name>
<accession>P65046</accession>
<accession>A0A1R3Y2H8</accession>
<accession>Q10831</accession>
<accession>X2BLT9</accession>
<organism>
    <name type="scientific">Mycobacterium bovis (strain ATCC BAA-935 / AF2122/97)</name>
    <dbReference type="NCBI Taxonomy" id="233413"/>
    <lineage>
        <taxon>Bacteria</taxon>
        <taxon>Bacillati</taxon>
        <taxon>Actinomycetota</taxon>
        <taxon>Actinomycetes</taxon>
        <taxon>Mycobacteriales</taxon>
        <taxon>Mycobacteriaceae</taxon>
        <taxon>Mycobacterium</taxon>
        <taxon>Mycobacterium tuberculosis complex</taxon>
    </lineage>
</organism>
<sequence>MSRILTHVPGRTVNRSYALPALVGSAAGRLSGNHSHGREAYIALPQWACSRQPSTPPLQTPGRINALWSLRPVLPMPGRGCQLLRLGGRWLSVVCCRNGSMNLVVWAEGNGVARVIAYRWLRVGRLPVPARRVGRVILVDEPAGQPGRWGRTAVCARLSSADQKVDLDRQVVGVTAWATAEQIPVGKVVTEVGSALYGRRRTFLTLLGDPTVRRIVMKRRDRLGRFGFECVQAVLAADGRELVVVDSADVDDDVVGDITEILTSICARLYGKRAAGNRAARAVAAAARAGGHEAR</sequence>
<proteinExistence type="predicted"/>
<dbReference type="EMBL" id="LT708304">
    <property type="protein sequence ID" value="SIU01531.1"/>
    <property type="molecule type" value="Genomic_DNA"/>
</dbReference>
<dbReference type="RefSeq" id="NP_856555.1">
    <property type="nucleotide sequence ID" value="NC_002945.3"/>
</dbReference>
<dbReference type="SMR" id="P65046"/>
<dbReference type="KEGG" id="mbo:BQ2027_MB2910C"/>
<dbReference type="PATRIC" id="fig|233413.5.peg.3194"/>
<dbReference type="Proteomes" id="UP000001419">
    <property type="component" value="Chromosome"/>
</dbReference>
<dbReference type="GO" id="GO:0003677">
    <property type="term" value="F:DNA binding"/>
    <property type="evidence" value="ECO:0007669"/>
    <property type="project" value="InterPro"/>
</dbReference>
<dbReference type="GO" id="GO:0000150">
    <property type="term" value="F:DNA strand exchange activity"/>
    <property type="evidence" value="ECO:0007669"/>
    <property type="project" value="InterPro"/>
</dbReference>
<dbReference type="FunFam" id="3.40.50.1390:FF:000002">
    <property type="entry name" value="ORF1 in transposon ISC1904"/>
    <property type="match status" value="1"/>
</dbReference>
<dbReference type="Gene3D" id="3.40.50.1390">
    <property type="entry name" value="Resolvase, N-terminal catalytic domain"/>
    <property type="match status" value="1"/>
</dbReference>
<dbReference type="InterPro" id="IPR051491">
    <property type="entry name" value="Recombinase/Transposase-rel"/>
</dbReference>
<dbReference type="InterPro" id="IPR006119">
    <property type="entry name" value="Resolv_N"/>
</dbReference>
<dbReference type="InterPro" id="IPR036162">
    <property type="entry name" value="Resolvase-like_N_sf"/>
</dbReference>
<dbReference type="InterPro" id="IPR048046">
    <property type="entry name" value="Transpos_IS607"/>
</dbReference>
<dbReference type="NCBIfam" id="NF033518">
    <property type="entry name" value="transpos_IS607"/>
    <property type="match status" value="1"/>
</dbReference>
<dbReference type="PANTHER" id="PTHR36172">
    <property type="match status" value="1"/>
</dbReference>
<dbReference type="PANTHER" id="PTHR36172:SF1">
    <property type="entry name" value="RESOLVASE-RELATED"/>
    <property type="match status" value="1"/>
</dbReference>
<dbReference type="Pfam" id="PF00239">
    <property type="entry name" value="Resolvase"/>
    <property type="match status" value="1"/>
</dbReference>
<dbReference type="SMART" id="SM00857">
    <property type="entry name" value="Resolvase"/>
    <property type="match status" value="1"/>
</dbReference>
<dbReference type="SUPFAM" id="SSF53041">
    <property type="entry name" value="Resolvase-like"/>
    <property type="match status" value="1"/>
</dbReference>
<dbReference type="PROSITE" id="PS51736">
    <property type="entry name" value="RECOMBINASES_3"/>
    <property type="match status" value="1"/>
</dbReference>
<evidence type="ECO:0000255" key="1">
    <source>
        <dbReference type="PROSITE-ProRule" id="PRU01072"/>
    </source>
</evidence>
<keyword id="KW-1185">Reference proteome</keyword>
<feature type="chain" id="PRO_0000104092" description="Uncharacterized protein Mb2910c">
    <location>
        <begin position="1"/>
        <end position="295"/>
    </location>
</feature>
<feature type="domain" description="Resolvase/invertase-type recombinase catalytic" evidence="1">
    <location>
        <begin position="151"/>
        <end position="290"/>
    </location>
</feature>
<feature type="active site" description="O-(5'-phospho-DNA)-serine intermediate" evidence="1">
    <location>
        <position position="159"/>
    </location>
</feature>